<accession>Q2FIB4</accession>
<gene>
    <name evidence="1" type="primary">argG</name>
    <name type="ordered locus">SAUSA300_0864</name>
</gene>
<protein>
    <recommendedName>
        <fullName evidence="1">Argininosuccinate synthase</fullName>
        <ecNumber evidence="1">6.3.4.5</ecNumber>
    </recommendedName>
    <alternativeName>
        <fullName evidence="1">Citrulline--aspartate ligase</fullName>
    </alternativeName>
</protein>
<reference key="1">
    <citation type="journal article" date="2006" name="Lancet">
        <title>Complete genome sequence of USA300, an epidemic clone of community-acquired meticillin-resistant Staphylococcus aureus.</title>
        <authorList>
            <person name="Diep B.A."/>
            <person name="Gill S.R."/>
            <person name="Chang R.F."/>
            <person name="Phan T.H."/>
            <person name="Chen J.H."/>
            <person name="Davidson M.G."/>
            <person name="Lin F."/>
            <person name="Lin J."/>
            <person name="Carleton H.A."/>
            <person name="Mongodin E.F."/>
            <person name="Sensabaugh G.F."/>
            <person name="Perdreau-Remington F."/>
        </authorList>
    </citation>
    <scope>NUCLEOTIDE SEQUENCE [LARGE SCALE GENOMIC DNA]</scope>
    <source>
        <strain>USA300</strain>
    </source>
</reference>
<organism>
    <name type="scientific">Staphylococcus aureus (strain USA300)</name>
    <dbReference type="NCBI Taxonomy" id="367830"/>
    <lineage>
        <taxon>Bacteria</taxon>
        <taxon>Bacillati</taxon>
        <taxon>Bacillota</taxon>
        <taxon>Bacilli</taxon>
        <taxon>Bacillales</taxon>
        <taxon>Staphylococcaceae</taxon>
        <taxon>Staphylococcus</taxon>
    </lineage>
</organism>
<evidence type="ECO:0000255" key="1">
    <source>
        <dbReference type="HAMAP-Rule" id="MF_00005"/>
    </source>
</evidence>
<comment type="catalytic activity">
    <reaction evidence="1">
        <text>L-citrulline + L-aspartate + ATP = 2-(N(omega)-L-arginino)succinate + AMP + diphosphate + H(+)</text>
        <dbReference type="Rhea" id="RHEA:10932"/>
        <dbReference type="ChEBI" id="CHEBI:15378"/>
        <dbReference type="ChEBI" id="CHEBI:29991"/>
        <dbReference type="ChEBI" id="CHEBI:30616"/>
        <dbReference type="ChEBI" id="CHEBI:33019"/>
        <dbReference type="ChEBI" id="CHEBI:57472"/>
        <dbReference type="ChEBI" id="CHEBI:57743"/>
        <dbReference type="ChEBI" id="CHEBI:456215"/>
        <dbReference type="EC" id="6.3.4.5"/>
    </reaction>
</comment>
<comment type="pathway">
    <text evidence="1">Amino-acid biosynthesis; L-arginine biosynthesis; L-arginine from L-ornithine and carbamoyl phosphate: step 2/3.</text>
</comment>
<comment type="subunit">
    <text evidence="1">Homotetramer.</text>
</comment>
<comment type="subcellular location">
    <subcellularLocation>
        <location evidence="1">Cytoplasm</location>
    </subcellularLocation>
</comment>
<comment type="similarity">
    <text evidence="1">Belongs to the argininosuccinate synthase family. Type 1 subfamily.</text>
</comment>
<dbReference type="EC" id="6.3.4.5" evidence="1"/>
<dbReference type="EMBL" id="CP000255">
    <property type="protein sequence ID" value="ABD21035.1"/>
    <property type="molecule type" value="Genomic_DNA"/>
</dbReference>
<dbReference type="RefSeq" id="WP_000660045.1">
    <property type="nucleotide sequence ID" value="NZ_CP027476.1"/>
</dbReference>
<dbReference type="SMR" id="Q2FIB4"/>
<dbReference type="KEGG" id="saa:SAUSA300_0864"/>
<dbReference type="HOGENOM" id="CLU_032784_4_2_9"/>
<dbReference type="OMA" id="WRWTVSP"/>
<dbReference type="UniPathway" id="UPA00068">
    <property type="reaction ID" value="UER00113"/>
</dbReference>
<dbReference type="Proteomes" id="UP000001939">
    <property type="component" value="Chromosome"/>
</dbReference>
<dbReference type="GO" id="GO:0005737">
    <property type="term" value="C:cytoplasm"/>
    <property type="evidence" value="ECO:0007669"/>
    <property type="project" value="UniProtKB-SubCell"/>
</dbReference>
<dbReference type="GO" id="GO:0004055">
    <property type="term" value="F:argininosuccinate synthase activity"/>
    <property type="evidence" value="ECO:0007669"/>
    <property type="project" value="UniProtKB-UniRule"/>
</dbReference>
<dbReference type="GO" id="GO:0005524">
    <property type="term" value="F:ATP binding"/>
    <property type="evidence" value="ECO:0007669"/>
    <property type="project" value="UniProtKB-UniRule"/>
</dbReference>
<dbReference type="GO" id="GO:0000053">
    <property type="term" value="P:argininosuccinate metabolic process"/>
    <property type="evidence" value="ECO:0007669"/>
    <property type="project" value="TreeGrafter"/>
</dbReference>
<dbReference type="GO" id="GO:0006526">
    <property type="term" value="P:L-arginine biosynthetic process"/>
    <property type="evidence" value="ECO:0007669"/>
    <property type="project" value="UniProtKB-UniRule"/>
</dbReference>
<dbReference type="GO" id="GO:0000050">
    <property type="term" value="P:urea cycle"/>
    <property type="evidence" value="ECO:0007669"/>
    <property type="project" value="TreeGrafter"/>
</dbReference>
<dbReference type="CDD" id="cd01999">
    <property type="entry name" value="ASS"/>
    <property type="match status" value="1"/>
</dbReference>
<dbReference type="FunFam" id="1.20.5.470:FF:000002">
    <property type="entry name" value="Argininosuccinate synthase"/>
    <property type="match status" value="1"/>
</dbReference>
<dbReference type="FunFam" id="3.40.50.620:FF:000038">
    <property type="entry name" value="Argininosuccinate synthase"/>
    <property type="match status" value="1"/>
</dbReference>
<dbReference type="FunFam" id="3.90.1260.10:FF:000007">
    <property type="entry name" value="Argininosuccinate synthase"/>
    <property type="match status" value="1"/>
</dbReference>
<dbReference type="Gene3D" id="3.90.1260.10">
    <property type="entry name" value="Argininosuccinate synthetase, chain A, domain 2"/>
    <property type="match status" value="1"/>
</dbReference>
<dbReference type="Gene3D" id="3.40.50.620">
    <property type="entry name" value="HUPs"/>
    <property type="match status" value="1"/>
</dbReference>
<dbReference type="Gene3D" id="1.20.5.470">
    <property type="entry name" value="Single helix bin"/>
    <property type="match status" value="1"/>
</dbReference>
<dbReference type="HAMAP" id="MF_00005">
    <property type="entry name" value="Arg_succ_synth_type1"/>
    <property type="match status" value="1"/>
</dbReference>
<dbReference type="InterPro" id="IPR048268">
    <property type="entry name" value="Arginosuc_syn_C"/>
</dbReference>
<dbReference type="InterPro" id="IPR048267">
    <property type="entry name" value="Arginosuc_syn_N"/>
</dbReference>
<dbReference type="InterPro" id="IPR001518">
    <property type="entry name" value="Arginosuc_synth"/>
</dbReference>
<dbReference type="InterPro" id="IPR018223">
    <property type="entry name" value="Arginosuc_synth_CS"/>
</dbReference>
<dbReference type="InterPro" id="IPR023434">
    <property type="entry name" value="Arginosuc_synth_type_1_subfam"/>
</dbReference>
<dbReference type="InterPro" id="IPR024074">
    <property type="entry name" value="AS_cat/multimer_dom_body"/>
</dbReference>
<dbReference type="InterPro" id="IPR014729">
    <property type="entry name" value="Rossmann-like_a/b/a_fold"/>
</dbReference>
<dbReference type="NCBIfam" id="TIGR00032">
    <property type="entry name" value="argG"/>
    <property type="match status" value="1"/>
</dbReference>
<dbReference type="NCBIfam" id="NF001770">
    <property type="entry name" value="PRK00509.1"/>
    <property type="match status" value="1"/>
</dbReference>
<dbReference type="PANTHER" id="PTHR11587">
    <property type="entry name" value="ARGININOSUCCINATE SYNTHASE"/>
    <property type="match status" value="1"/>
</dbReference>
<dbReference type="PANTHER" id="PTHR11587:SF2">
    <property type="entry name" value="ARGININOSUCCINATE SYNTHASE"/>
    <property type="match status" value="1"/>
</dbReference>
<dbReference type="Pfam" id="PF20979">
    <property type="entry name" value="Arginosuc_syn_C"/>
    <property type="match status" value="1"/>
</dbReference>
<dbReference type="Pfam" id="PF00764">
    <property type="entry name" value="Arginosuc_synth"/>
    <property type="match status" value="1"/>
</dbReference>
<dbReference type="SUPFAM" id="SSF52402">
    <property type="entry name" value="Adenine nucleotide alpha hydrolases-like"/>
    <property type="match status" value="1"/>
</dbReference>
<dbReference type="SUPFAM" id="SSF69864">
    <property type="entry name" value="Argininosuccinate synthetase, C-terminal domain"/>
    <property type="match status" value="1"/>
</dbReference>
<dbReference type="PROSITE" id="PS00564">
    <property type="entry name" value="ARGININOSUCCIN_SYN_1"/>
    <property type="match status" value="1"/>
</dbReference>
<dbReference type="PROSITE" id="PS00565">
    <property type="entry name" value="ARGININOSUCCIN_SYN_2"/>
    <property type="match status" value="1"/>
</dbReference>
<proteinExistence type="inferred from homology"/>
<name>ASSY_STAA3</name>
<feature type="chain" id="PRO_0000263977" description="Argininosuccinate synthase">
    <location>
        <begin position="1"/>
        <end position="401"/>
    </location>
</feature>
<feature type="binding site" evidence="1">
    <location>
        <begin position="8"/>
        <end position="16"/>
    </location>
    <ligand>
        <name>ATP</name>
        <dbReference type="ChEBI" id="CHEBI:30616"/>
    </ligand>
</feature>
<feature type="binding site" evidence="1">
    <location>
        <position position="85"/>
    </location>
    <ligand>
        <name>L-citrulline</name>
        <dbReference type="ChEBI" id="CHEBI:57743"/>
    </ligand>
</feature>
<feature type="binding site" evidence="1">
    <location>
        <position position="115"/>
    </location>
    <ligand>
        <name>ATP</name>
        <dbReference type="ChEBI" id="CHEBI:30616"/>
    </ligand>
</feature>
<feature type="binding site" evidence="1">
    <location>
        <position position="117"/>
    </location>
    <ligand>
        <name>L-aspartate</name>
        <dbReference type="ChEBI" id="CHEBI:29991"/>
    </ligand>
</feature>
<feature type="binding site" evidence="1">
    <location>
        <position position="121"/>
    </location>
    <ligand>
        <name>L-aspartate</name>
        <dbReference type="ChEBI" id="CHEBI:29991"/>
    </ligand>
</feature>
<feature type="binding site" evidence="1">
    <location>
        <position position="121"/>
    </location>
    <ligand>
        <name>L-citrulline</name>
        <dbReference type="ChEBI" id="CHEBI:57743"/>
    </ligand>
</feature>
<feature type="binding site" evidence="1">
    <location>
        <position position="122"/>
    </location>
    <ligand>
        <name>L-aspartate</name>
        <dbReference type="ChEBI" id="CHEBI:29991"/>
    </ligand>
</feature>
<feature type="binding site" evidence="1">
    <location>
        <position position="125"/>
    </location>
    <ligand>
        <name>L-citrulline</name>
        <dbReference type="ChEBI" id="CHEBI:57743"/>
    </ligand>
</feature>
<feature type="binding site" evidence="1">
    <location>
        <position position="173"/>
    </location>
    <ligand>
        <name>L-citrulline</name>
        <dbReference type="ChEBI" id="CHEBI:57743"/>
    </ligand>
</feature>
<feature type="binding site" evidence="1">
    <location>
        <position position="258"/>
    </location>
    <ligand>
        <name>L-citrulline</name>
        <dbReference type="ChEBI" id="CHEBI:57743"/>
    </ligand>
</feature>
<feature type="binding site" evidence="1">
    <location>
        <position position="270"/>
    </location>
    <ligand>
        <name>L-citrulline</name>
        <dbReference type="ChEBI" id="CHEBI:57743"/>
    </ligand>
</feature>
<sequence>MKEKIVLAYSGGLDTSVAVQWLIDKGYDVVACCLDVGEGKDLDIVYKKALDMGAVECHIIDATKEFSDEYVSYAIKGNLMYENAYPLVSALSRPLIAKKLVEIAEKTNSVGIAHGCTGKGNDQVRFEVAIKALNPSLKAFAPVREWAWSREEEIDYAIKHNIPVSINHDSPYSIDQNLWGRANECGILEDPYAAPPEDAFDLTNALEETPDTADEIILTFDKGIPVQIDGKTYELDDLILTLNALAGKHGIGRIDHVENRLVGIKSREIYEAPAAEVILKAHKALETITLTKDVAHFKPIIEKQFAEQLYNGLWFSPLTDSLKLFIDSTQQYVSGDVRIKLFKGNAIVNGRKSPYTLYDEKLATYTKEDAFNQDAAVGFIDIYGLPTQVNAMLHGGYSNEQ</sequence>
<keyword id="KW-0028">Amino-acid biosynthesis</keyword>
<keyword id="KW-0055">Arginine biosynthesis</keyword>
<keyword id="KW-0067">ATP-binding</keyword>
<keyword id="KW-0963">Cytoplasm</keyword>
<keyword id="KW-0436">Ligase</keyword>
<keyword id="KW-0547">Nucleotide-binding</keyword>